<evidence type="ECO:0000250" key="1"/>
<evidence type="ECO:0000255" key="2"/>
<evidence type="ECO:0000256" key="3">
    <source>
        <dbReference type="SAM" id="MobiDB-lite"/>
    </source>
</evidence>
<evidence type="ECO:0000305" key="4"/>
<feature type="chain" id="PRO_0000395862" description="Uncharacterized ABC transporter permease Rv0072">
    <location>
        <begin position="1"/>
        <end position="349"/>
    </location>
</feature>
<feature type="transmembrane region" description="Helical" evidence="2">
    <location>
        <begin position="16"/>
        <end position="36"/>
    </location>
</feature>
<feature type="transmembrane region" description="Helical" evidence="2">
    <location>
        <begin position="231"/>
        <end position="251"/>
    </location>
</feature>
<feature type="transmembrane region" description="Helical" evidence="2">
    <location>
        <begin position="284"/>
        <end position="304"/>
    </location>
</feature>
<feature type="transmembrane region" description="Helical" evidence="2">
    <location>
        <begin position="307"/>
        <end position="327"/>
    </location>
</feature>
<feature type="region of interest" description="Disordered" evidence="3">
    <location>
        <begin position="111"/>
        <end position="139"/>
    </location>
</feature>
<feature type="compositionally biased region" description="Basic and acidic residues" evidence="3">
    <location>
        <begin position="124"/>
        <end position="134"/>
    </location>
</feature>
<protein>
    <recommendedName>
        <fullName>Uncharacterized ABC transporter permease Rv0072</fullName>
    </recommendedName>
</protein>
<gene>
    <name type="ordered locus">Rv0072</name>
</gene>
<dbReference type="EMBL" id="AL123456">
    <property type="protein sequence ID" value="CCP42795.1"/>
    <property type="molecule type" value="Genomic_DNA"/>
</dbReference>
<dbReference type="PIR" id="A70849">
    <property type="entry name" value="A70849"/>
</dbReference>
<dbReference type="RefSeq" id="NP_214586.1">
    <property type="nucleotide sequence ID" value="NC_000962.3"/>
</dbReference>
<dbReference type="RefSeq" id="WP_003400616.1">
    <property type="nucleotide sequence ID" value="NZ_NVQJ01000005.1"/>
</dbReference>
<dbReference type="SMR" id="P9WG17"/>
<dbReference type="FunCoup" id="P9WG17">
    <property type="interactions" value="1"/>
</dbReference>
<dbReference type="STRING" id="83332.Rv0072"/>
<dbReference type="PaxDb" id="83332-Rv0072"/>
<dbReference type="DNASU" id="886984"/>
<dbReference type="GeneID" id="886984"/>
<dbReference type="KEGG" id="mtu:Rv0072"/>
<dbReference type="KEGG" id="mtv:RVBD_0072"/>
<dbReference type="TubercuList" id="Rv0072"/>
<dbReference type="eggNOG" id="COG0577">
    <property type="taxonomic scope" value="Bacteria"/>
</dbReference>
<dbReference type="InParanoid" id="P9WG17"/>
<dbReference type="OrthoDB" id="7298150at2"/>
<dbReference type="PhylomeDB" id="P9WG17"/>
<dbReference type="Proteomes" id="UP000001584">
    <property type="component" value="Chromosome"/>
</dbReference>
<dbReference type="GO" id="GO:0005576">
    <property type="term" value="C:extracellular region"/>
    <property type="evidence" value="ECO:0007005"/>
    <property type="project" value="MTBBASE"/>
</dbReference>
<dbReference type="GO" id="GO:0005886">
    <property type="term" value="C:plasma membrane"/>
    <property type="evidence" value="ECO:0007005"/>
    <property type="project" value="MTBBASE"/>
</dbReference>
<dbReference type="InterPro" id="IPR051125">
    <property type="entry name" value="ABC-4/HrtB_transporter"/>
</dbReference>
<dbReference type="InterPro" id="IPR003838">
    <property type="entry name" value="ABC3_permease_C"/>
</dbReference>
<dbReference type="InterPro" id="IPR025857">
    <property type="entry name" value="MacB_PCD"/>
</dbReference>
<dbReference type="PANTHER" id="PTHR43738">
    <property type="entry name" value="ABC TRANSPORTER, MEMBRANE PROTEIN"/>
    <property type="match status" value="1"/>
</dbReference>
<dbReference type="PANTHER" id="PTHR43738:SF1">
    <property type="entry name" value="HEMIN TRANSPORT SYSTEM PERMEASE PROTEIN HRTB-RELATED"/>
    <property type="match status" value="1"/>
</dbReference>
<dbReference type="Pfam" id="PF02687">
    <property type="entry name" value="FtsX"/>
    <property type="match status" value="1"/>
</dbReference>
<dbReference type="Pfam" id="PF12704">
    <property type="entry name" value="MacB_PCD"/>
    <property type="match status" value="1"/>
</dbReference>
<comment type="function">
    <text evidence="1">Probably part of an ABC transporter complex. Probably responsible for the translocation of the substrate across the membrane (By similarity).</text>
</comment>
<comment type="subunit">
    <text evidence="4">The complex is composed of two ATP-binding proteins (Rv0073), two transmembrane proteins (Rv0072) and a solute-binding protein.</text>
</comment>
<comment type="subcellular location">
    <subcellularLocation>
        <location evidence="4">Cell membrane</location>
        <topology evidence="4">Multi-pass membrane protein</topology>
    </subcellularLocation>
</comment>
<comment type="similarity">
    <text evidence="4">Belongs to the ABC-4 integral membrane protein family.</text>
</comment>
<reference key="1">
    <citation type="journal article" date="1998" name="Nature">
        <title>Deciphering the biology of Mycobacterium tuberculosis from the complete genome sequence.</title>
        <authorList>
            <person name="Cole S.T."/>
            <person name="Brosch R."/>
            <person name="Parkhill J."/>
            <person name="Garnier T."/>
            <person name="Churcher C.M."/>
            <person name="Harris D.E."/>
            <person name="Gordon S.V."/>
            <person name="Eiglmeier K."/>
            <person name="Gas S."/>
            <person name="Barry C.E. III"/>
            <person name="Tekaia F."/>
            <person name="Badcock K."/>
            <person name="Basham D."/>
            <person name="Brown D."/>
            <person name="Chillingworth T."/>
            <person name="Connor R."/>
            <person name="Davies R.M."/>
            <person name="Devlin K."/>
            <person name="Feltwell T."/>
            <person name="Gentles S."/>
            <person name="Hamlin N."/>
            <person name="Holroyd S."/>
            <person name="Hornsby T."/>
            <person name="Jagels K."/>
            <person name="Krogh A."/>
            <person name="McLean J."/>
            <person name="Moule S."/>
            <person name="Murphy L.D."/>
            <person name="Oliver S."/>
            <person name="Osborne J."/>
            <person name="Quail M.A."/>
            <person name="Rajandream M.A."/>
            <person name="Rogers J."/>
            <person name="Rutter S."/>
            <person name="Seeger K."/>
            <person name="Skelton S."/>
            <person name="Squares S."/>
            <person name="Squares R."/>
            <person name="Sulston J.E."/>
            <person name="Taylor K."/>
            <person name="Whitehead S."/>
            <person name="Barrell B.G."/>
        </authorList>
    </citation>
    <scope>NUCLEOTIDE SEQUENCE [LARGE SCALE GENOMIC DNA]</scope>
    <source>
        <strain>ATCC 25618 / H37Rv</strain>
    </source>
</reference>
<reference key="2">
    <citation type="journal article" date="2011" name="Mol. Cell. Proteomics">
        <title>Proteogenomic analysis of Mycobacterium tuberculosis by high resolution mass spectrometry.</title>
        <authorList>
            <person name="Kelkar D.S."/>
            <person name="Kumar D."/>
            <person name="Kumar P."/>
            <person name="Balakrishnan L."/>
            <person name="Muthusamy B."/>
            <person name="Yadav A.K."/>
            <person name="Shrivastava P."/>
            <person name="Marimuthu A."/>
            <person name="Anand S."/>
            <person name="Sundaram H."/>
            <person name="Kingsbury R."/>
            <person name="Harsha H.C."/>
            <person name="Nair B."/>
            <person name="Prasad T.S."/>
            <person name="Chauhan D.S."/>
            <person name="Katoch K."/>
            <person name="Katoch V.M."/>
            <person name="Kumar P."/>
            <person name="Chaerkady R."/>
            <person name="Ramachandran S."/>
            <person name="Dash D."/>
            <person name="Pandey A."/>
        </authorList>
    </citation>
    <scope>IDENTIFICATION BY MASS SPECTROMETRY [LARGE SCALE ANALYSIS]</scope>
    <source>
        <strain>ATCC 25618 / H37Rv</strain>
    </source>
</reference>
<proteinExistence type="evidence at protein level"/>
<name>Y072_MYCTU</name>
<keyword id="KW-1003">Cell membrane</keyword>
<keyword id="KW-0472">Membrane</keyword>
<keyword id="KW-1185">Reference proteome</keyword>
<keyword id="KW-0812">Transmembrane</keyword>
<keyword id="KW-1133">Transmembrane helix</keyword>
<keyword id="KW-0813">Transport</keyword>
<organism>
    <name type="scientific">Mycobacterium tuberculosis (strain ATCC 25618 / H37Rv)</name>
    <dbReference type="NCBI Taxonomy" id="83332"/>
    <lineage>
        <taxon>Bacteria</taxon>
        <taxon>Bacillati</taxon>
        <taxon>Actinomycetota</taxon>
        <taxon>Actinomycetes</taxon>
        <taxon>Mycobacteriales</taxon>
        <taxon>Mycobacteriaceae</taxon>
        <taxon>Mycobacterium</taxon>
        <taxon>Mycobacterium tuberculosis complex</taxon>
    </lineage>
</organism>
<sequence>MLFAALRDMQWRKRRLVITIISTGLIFGMTLVLTGLANGFRVEARHTVDSMGVDVFVVRSGAAGPFLGSIPFPDVDLARVAAEPGVMAAAPLGSVGTIMKEGTSTRNVTVFGAPEHGPGMPRVSEGRSPSKPDEVAASSTMGRHLGDTVEVGARRLRVVGIVPNSTALAKIPNVFLTTEGLQKLAYNGQPNITSIGIIGMPRQLPEGYQTFDRVGAVNDLVRPLKVAVNSISIVAVLLWIVAVLIVGSVVYLSALERLRDFAVFKAIGTPTRSIMAGLALQALVIALLAAVVGVVLAQVLAPLFPMIVAVPVGAYLALPVAAIVIGLFASVAGLKRVVTVDPAQAFGGP</sequence>
<accession>P9WG17</accession>
<accession>L0T2H8</accession>
<accession>O53617</accession>
<accession>Q7DAI3</accession>